<evidence type="ECO:0000255" key="1">
    <source>
        <dbReference type="HAMAP-Rule" id="MF_00147"/>
    </source>
</evidence>
<comment type="function">
    <text evidence="1">Involved in the gluconeogenesis. Catalyzes stereospecifically the conversion of dihydroxyacetone phosphate (DHAP) to D-glyceraldehyde-3-phosphate (G3P).</text>
</comment>
<comment type="catalytic activity">
    <reaction evidence="1">
        <text>D-glyceraldehyde 3-phosphate = dihydroxyacetone phosphate</text>
        <dbReference type="Rhea" id="RHEA:18585"/>
        <dbReference type="ChEBI" id="CHEBI:57642"/>
        <dbReference type="ChEBI" id="CHEBI:59776"/>
        <dbReference type="EC" id="5.3.1.1"/>
    </reaction>
</comment>
<comment type="pathway">
    <text evidence="1">Carbohydrate biosynthesis; gluconeogenesis.</text>
</comment>
<comment type="pathway">
    <text evidence="1">Carbohydrate degradation; glycolysis; D-glyceraldehyde 3-phosphate from glycerone phosphate: step 1/1.</text>
</comment>
<comment type="subunit">
    <text evidence="1">Homodimer.</text>
</comment>
<comment type="subcellular location">
    <subcellularLocation>
        <location evidence="1">Cytoplasm</location>
    </subcellularLocation>
</comment>
<comment type="similarity">
    <text evidence="1">Belongs to the triosephosphate isomerase family.</text>
</comment>
<gene>
    <name evidence="1" type="primary">tpiA</name>
    <name type="ordered locus">PMI3205</name>
</gene>
<reference key="1">
    <citation type="journal article" date="2008" name="J. Bacteriol.">
        <title>Complete genome sequence of uropathogenic Proteus mirabilis, a master of both adherence and motility.</title>
        <authorList>
            <person name="Pearson M.M."/>
            <person name="Sebaihia M."/>
            <person name="Churcher C."/>
            <person name="Quail M.A."/>
            <person name="Seshasayee A.S."/>
            <person name="Luscombe N.M."/>
            <person name="Abdellah Z."/>
            <person name="Arrosmith C."/>
            <person name="Atkin B."/>
            <person name="Chillingworth T."/>
            <person name="Hauser H."/>
            <person name="Jagels K."/>
            <person name="Moule S."/>
            <person name="Mungall K."/>
            <person name="Norbertczak H."/>
            <person name="Rabbinowitsch E."/>
            <person name="Walker D."/>
            <person name="Whithead S."/>
            <person name="Thomson N.R."/>
            <person name="Rather P.N."/>
            <person name="Parkhill J."/>
            <person name="Mobley H.L.T."/>
        </authorList>
    </citation>
    <scope>NUCLEOTIDE SEQUENCE [LARGE SCALE GENOMIC DNA]</scope>
    <source>
        <strain>HI4320</strain>
    </source>
</reference>
<dbReference type="EC" id="5.3.1.1" evidence="1"/>
<dbReference type="EMBL" id="AM942759">
    <property type="protein sequence ID" value="CAR46285.1"/>
    <property type="molecule type" value="Genomic_DNA"/>
</dbReference>
<dbReference type="RefSeq" id="WP_004249716.1">
    <property type="nucleotide sequence ID" value="NC_010554.1"/>
</dbReference>
<dbReference type="SMR" id="B4F161"/>
<dbReference type="EnsemblBacteria" id="CAR46285">
    <property type="protein sequence ID" value="CAR46285"/>
    <property type="gene ID" value="PMI3205"/>
</dbReference>
<dbReference type="GeneID" id="6799975"/>
<dbReference type="KEGG" id="pmr:PMI3205"/>
<dbReference type="PATRIC" id="fig|529507.6.peg.3132"/>
<dbReference type="eggNOG" id="COG0149">
    <property type="taxonomic scope" value="Bacteria"/>
</dbReference>
<dbReference type="HOGENOM" id="CLU_024251_2_1_6"/>
<dbReference type="UniPathway" id="UPA00109">
    <property type="reaction ID" value="UER00189"/>
</dbReference>
<dbReference type="UniPathway" id="UPA00138"/>
<dbReference type="Proteomes" id="UP000008319">
    <property type="component" value="Chromosome"/>
</dbReference>
<dbReference type="GO" id="GO:0005829">
    <property type="term" value="C:cytosol"/>
    <property type="evidence" value="ECO:0007669"/>
    <property type="project" value="TreeGrafter"/>
</dbReference>
<dbReference type="GO" id="GO:0004807">
    <property type="term" value="F:triose-phosphate isomerase activity"/>
    <property type="evidence" value="ECO:0007669"/>
    <property type="project" value="UniProtKB-UniRule"/>
</dbReference>
<dbReference type="GO" id="GO:0006094">
    <property type="term" value="P:gluconeogenesis"/>
    <property type="evidence" value="ECO:0007669"/>
    <property type="project" value="UniProtKB-UniRule"/>
</dbReference>
<dbReference type="GO" id="GO:0046166">
    <property type="term" value="P:glyceraldehyde-3-phosphate biosynthetic process"/>
    <property type="evidence" value="ECO:0007669"/>
    <property type="project" value="TreeGrafter"/>
</dbReference>
<dbReference type="GO" id="GO:0019563">
    <property type="term" value="P:glycerol catabolic process"/>
    <property type="evidence" value="ECO:0007669"/>
    <property type="project" value="TreeGrafter"/>
</dbReference>
<dbReference type="GO" id="GO:0006096">
    <property type="term" value="P:glycolytic process"/>
    <property type="evidence" value="ECO:0007669"/>
    <property type="project" value="UniProtKB-UniRule"/>
</dbReference>
<dbReference type="CDD" id="cd00311">
    <property type="entry name" value="TIM"/>
    <property type="match status" value="1"/>
</dbReference>
<dbReference type="FunFam" id="3.20.20.70:FF:000020">
    <property type="entry name" value="Triosephosphate isomerase"/>
    <property type="match status" value="1"/>
</dbReference>
<dbReference type="Gene3D" id="3.20.20.70">
    <property type="entry name" value="Aldolase class I"/>
    <property type="match status" value="1"/>
</dbReference>
<dbReference type="HAMAP" id="MF_00147_B">
    <property type="entry name" value="TIM_B"/>
    <property type="match status" value="1"/>
</dbReference>
<dbReference type="InterPro" id="IPR013785">
    <property type="entry name" value="Aldolase_TIM"/>
</dbReference>
<dbReference type="InterPro" id="IPR035990">
    <property type="entry name" value="TIM_sf"/>
</dbReference>
<dbReference type="InterPro" id="IPR022896">
    <property type="entry name" value="TrioseP_Isoase_bac/euk"/>
</dbReference>
<dbReference type="InterPro" id="IPR000652">
    <property type="entry name" value="Triosephosphate_isomerase"/>
</dbReference>
<dbReference type="InterPro" id="IPR020861">
    <property type="entry name" value="Triosephosphate_isomerase_AS"/>
</dbReference>
<dbReference type="NCBIfam" id="TIGR00419">
    <property type="entry name" value="tim"/>
    <property type="match status" value="1"/>
</dbReference>
<dbReference type="PANTHER" id="PTHR21139">
    <property type="entry name" value="TRIOSEPHOSPHATE ISOMERASE"/>
    <property type="match status" value="1"/>
</dbReference>
<dbReference type="PANTHER" id="PTHR21139:SF42">
    <property type="entry name" value="TRIOSEPHOSPHATE ISOMERASE"/>
    <property type="match status" value="1"/>
</dbReference>
<dbReference type="Pfam" id="PF00121">
    <property type="entry name" value="TIM"/>
    <property type="match status" value="1"/>
</dbReference>
<dbReference type="SUPFAM" id="SSF51351">
    <property type="entry name" value="Triosephosphate isomerase (TIM)"/>
    <property type="match status" value="1"/>
</dbReference>
<dbReference type="PROSITE" id="PS00171">
    <property type="entry name" value="TIM_1"/>
    <property type="match status" value="1"/>
</dbReference>
<dbReference type="PROSITE" id="PS51440">
    <property type="entry name" value="TIM_2"/>
    <property type="match status" value="1"/>
</dbReference>
<sequence>MRHPLVMGNWKLNGSIHMVHELIAALRKEISGVAGCDVAIAPPTVYLCQARHEIGGSRIALGAQDTGVNLSGAFTGETSPEMLKNVDVKYVIIGHSERRTYHKESDEFIAQKFGVLKELGLTPVLCIGETEAENEAGKTQEVCARQIDAILNAHGAQAFKDAVIAYEPIWAIGTGKSATPAQAQAVHKFIRDHIAKQDAAIAEQVIIQYGGSVNDKNAAELFSQPDIDGALVGGASLKADAFAVIVKAAAEAKAKK</sequence>
<organism>
    <name type="scientific">Proteus mirabilis (strain HI4320)</name>
    <dbReference type="NCBI Taxonomy" id="529507"/>
    <lineage>
        <taxon>Bacteria</taxon>
        <taxon>Pseudomonadati</taxon>
        <taxon>Pseudomonadota</taxon>
        <taxon>Gammaproteobacteria</taxon>
        <taxon>Enterobacterales</taxon>
        <taxon>Morganellaceae</taxon>
        <taxon>Proteus</taxon>
    </lineage>
</organism>
<keyword id="KW-0963">Cytoplasm</keyword>
<keyword id="KW-0312">Gluconeogenesis</keyword>
<keyword id="KW-0324">Glycolysis</keyword>
<keyword id="KW-0413">Isomerase</keyword>
<keyword id="KW-1185">Reference proteome</keyword>
<name>TPIS_PROMH</name>
<proteinExistence type="inferred from homology"/>
<protein>
    <recommendedName>
        <fullName evidence="1">Triosephosphate isomerase</fullName>
        <shortName evidence="1">TIM</shortName>
        <shortName evidence="1">TPI</shortName>
        <ecNumber evidence="1">5.3.1.1</ecNumber>
    </recommendedName>
    <alternativeName>
        <fullName evidence="1">Triose-phosphate isomerase</fullName>
    </alternativeName>
</protein>
<feature type="chain" id="PRO_1000096523" description="Triosephosphate isomerase">
    <location>
        <begin position="1"/>
        <end position="256"/>
    </location>
</feature>
<feature type="active site" description="Electrophile" evidence="1">
    <location>
        <position position="95"/>
    </location>
</feature>
<feature type="active site" description="Proton acceptor" evidence="1">
    <location>
        <position position="167"/>
    </location>
</feature>
<feature type="binding site" evidence="1">
    <location>
        <begin position="9"/>
        <end position="11"/>
    </location>
    <ligand>
        <name>substrate</name>
    </ligand>
</feature>
<feature type="binding site" evidence="1">
    <location>
        <position position="173"/>
    </location>
    <ligand>
        <name>substrate</name>
    </ligand>
</feature>
<feature type="binding site" evidence="1">
    <location>
        <position position="212"/>
    </location>
    <ligand>
        <name>substrate</name>
    </ligand>
</feature>
<feature type="binding site" evidence="1">
    <location>
        <begin position="233"/>
        <end position="234"/>
    </location>
    <ligand>
        <name>substrate</name>
    </ligand>
</feature>
<accession>B4F161</accession>